<keyword id="KW-0030">Aminoacyl-tRNA synthetase</keyword>
<keyword id="KW-0067">ATP-binding</keyword>
<keyword id="KW-0963">Cytoplasm</keyword>
<keyword id="KW-0436">Ligase</keyword>
<keyword id="KW-0547">Nucleotide-binding</keyword>
<keyword id="KW-0648">Protein biosynthesis</keyword>
<dbReference type="EC" id="6.1.1.4" evidence="1"/>
<dbReference type="EMBL" id="CP000777">
    <property type="protein sequence ID" value="ABZ92800.1"/>
    <property type="molecule type" value="Genomic_DNA"/>
</dbReference>
<dbReference type="RefSeq" id="WP_012387295.1">
    <property type="nucleotide sequence ID" value="NC_010842.1"/>
</dbReference>
<dbReference type="SMR" id="B0SAB8"/>
<dbReference type="KEGG" id="lbf:LBF_0255"/>
<dbReference type="HOGENOM" id="CLU_004427_0_0_12"/>
<dbReference type="GO" id="GO:0005829">
    <property type="term" value="C:cytosol"/>
    <property type="evidence" value="ECO:0007669"/>
    <property type="project" value="TreeGrafter"/>
</dbReference>
<dbReference type="GO" id="GO:0002161">
    <property type="term" value="F:aminoacyl-tRNA deacylase activity"/>
    <property type="evidence" value="ECO:0007669"/>
    <property type="project" value="InterPro"/>
</dbReference>
<dbReference type="GO" id="GO:0005524">
    <property type="term" value="F:ATP binding"/>
    <property type="evidence" value="ECO:0007669"/>
    <property type="project" value="UniProtKB-UniRule"/>
</dbReference>
<dbReference type="GO" id="GO:0004823">
    <property type="term" value="F:leucine-tRNA ligase activity"/>
    <property type="evidence" value="ECO:0007669"/>
    <property type="project" value="UniProtKB-UniRule"/>
</dbReference>
<dbReference type="GO" id="GO:0006429">
    <property type="term" value="P:leucyl-tRNA aminoacylation"/>
    <property type="evidence" value="ECO:0007669"/>
    <property type="project" value="UniProtKB-UniRule"/>
</dbReference>
<dbReference type="CDD" id="cd07958">
    <property type="entry name" value="Anticodon_Ia_Leu_BEm"/>
    <property type="match status" value="1"/>
</dbReference>
<dbReference type="FunFam" id="1.10.730.10:FF:000012">
    <property type="entry name" value="Leucine--tRNA ligase"/>
    <property type="match status" value="1"/>
</dbReference>
<dbReference type="FunFam" id="3.40.50.620:FF:000056">
    <property type="entry name" value="Leucine--tRNA ligase"/>
    <property type="match status" value="1"/>
</dbReference>
<dbReference type="FunFam" id="3.40.50.620:FF:000060">
    <property type="entry name" value="Leucine--tRNA ligase"/>
    <property type="match status" value="1"/>
</dbReference>
<dbReference type="FunFam" id="1.10.730.10:FF:000011">
    <property type="entry name" value="Leucine--tRNA ligase chloroplastic/mitochondrial"/>
    <property type="match status" value="1"/>
</dbReference>
<dbReference type="Gene3D" id="3.10.20.590">
    <property type="match status" value="1"/>
</dbReference>
<dbReference type="Gene3D" id="3.40.50.620">
    <property type="entry name" value="HUPs"/>
    <property type="match status" value="3"/>
</dbReference>
<dbReference type="Gene3D" id="1.10.730.10">
    <property type="entry name" value="Isoleucyl-tRNA Synthetase, Domain 1"/>
    <property type="match status" value="1"/>
</dbReference>
<dbReference type="HAMAP" id="MF_00049_B">
    <property type="entry name" value="Leu_tRNA_synth_B"/>
    <property type="match status" value="1"/>
</dbReference>
<dbReference type="InterPro" id="IPR001412">
    <property type="entry name" value="aa-tRNA-synth_I_CS"/>
</dbReference>
<dbReference type="InterPro" id="IPR002300">
    <property type="entry name" value="aa-tRNA-synth_Ia"/>
</dbReference>
<dbReference type="InterPro" id="IPR002302">
    <property type="entry name" value="Leu-tRNA-ligase"/>
</dbReference>
<dbReference type="InterPro" id="IPR025709">
    <property type="entry name" value="Leu_tRNA-synth_edit"/>
</dbReference>
<dbReference type="InterPro" id="IPR013155">
    <property type="entry name" value="M/V/L/I-tRNA-synth_anticd-bd"/>
</dbReference>
<dbReference type="InterPro" id="IPR014729">
    <property type="entry name" value="Rossmann-like_a/b/a_fold"/>
</dbReference>
<dbReference type="InterPro" id="IPR009080">
    <property type="entry name" value="tRNAsynth_Ia_anticodon-bd"/>
</dbReference>
<dbReference type="InterPro" id="IPR009008">
    <property type="entry name" value="Val/Leu/Ile-tRNA-synth_edit"/>
</dbReference>
<dbReference type="NCBIfam" id="TIGR00396">
    <property type="entry name" value="leuS_bact"/>
    <property type="match status" value="1"/>
</dbReference>
<dbReference type="PANTHER" id="PTHR43740:SF2">
    <property type="entry name" value="LEUCINE--TRNA LIGASE, MITOCHONDRIAL"/>
    <property type="match status" value="1"/>
</dbReference>
<dbReference type="PANTHER" id="PTHR43740">
    <property type="entry name" value="LEUCYL-TRNA SYNTHETASE"/>
    <property type="match status" value="1"/>
</dbReference>
<dbReference type="Pfam" id="PF08264">
    <property type="entry name" value="Anticodon_1"/>
    <property type="match status" value="1"/>
</dbReference>
<dbReference type="Pfam" id="PF00133">
    <property type="entry name" value="tRNA-synt_1"/>
    <property type="match status" value="2"/>
</dbReference>
<dbReference type="Pfam" id="PF13603">
    <property type="entry name" value="tRNA-synt_1_2"/>
    <property type="match status" value="1"/>
</dbReference>
<dbReference type="PRINTS" id="PR00985">
    <property type="entry name" value="TRNASYNTHLEU"/>
</dbReference>
<dbReference type="SUPFAM" id="SSF47323">
    <property type="entry name" value="Anticodon-binding domain of a subclass of class I aminoacyl-tRNA synthetases"/>
    <property type="match status" value="1"/>
</dbReference>
<dbReference type="SUPFAM" id="SSF52374">
    <property type="entry name" value="Nucleotidylyl transferase"/>
    <property type="match status" value="1"/>
</dbReference>
<dbReference type="SUPFAM" id="SSF50677">
    <property type="entry name" value="ValRS/IleRS/LeuRS editing domain"/>
    <property type="match status" value="1"/>
</dbReference>
<dbReference type="PROSITE" id="PS00178">
    <property type="entry name" value="AA_TRNA_LIGASE_I"/>
    <property type="match status" value="1"/>
</dbReference>
<feature type="chain" id="PRO_1000091331" description="Leucine--tRNA ligase">
    <location>
        <begin position="1"/>
        <end position="867"/>
    </location>
</feature>
<feature type="short sequence motif" description="'HIGH' region">
    <location>
        <begin position="40"/>
        <end position="51"/>
    </location>
</feature>
<feature type="short sequence motif" description="'KMSKS' region">
    <location>
        <begin position="638"/>
        <end position="642"/>
    </location>
</feature>
<feature type="binding site" evidence="1">
    <location>
        <position position="641"/>
    </location>
    <ligand>
        <name>ATP</name>
        <dbReference type="ChEBI" id="CHEBI:30616"/>
    </ligand>
</feature>
<proteinExistence type="inferred from homology"/>
<comment type="catalytic activity">
    <reaction evidence="1">
        <text>tRNA(Leu) + L-leucine + ATP = L-leucyl-tRNA(Leu) + AMP + diphosphate</text>
        <dbReference type="Rhea" id="RHEA:11688"/>
        <dbReference type="Rhea" id="RHEA-COMP:9613"/>
        <dbReference type="Rhea" id="RHEA-COMP:9622"/>
        <dbReference type="ChEBI" id="CHEBI:30616"/>
        <dbReference type="ChEBI" id="CHEBI:33019"/>
        <dbReference type="ChEBI" id="CHEBI:57427"/>
        <dbReference type="ChEBI" id="CHEBI:78442"/>
        <dbReference type="ChEBI" id="CHEBI:78494"/>
        <dbReference type="ChEBI" id="CHEBI:456215"/>
        <dbReference type="EC" id="6.1.1.4"/>
    </reaction>
</comment>
<comment type="subcellular location">
    <subcellularLocation>
        <location evidence="1">Cytoplasm</location>
    </subcellularLocation>
</comment>
<comment type="similarity">
    <text evidence="1">Belongs to the class-I aminoacyl-tRNA synthetase family.</text>
</comment>
<organism>
    <name type="scientific">Leptospira biflexa serovar Patoc (strain Patoc 1 / Ames)</name>
    <dbReference type="NCBI Taxonomy" id="355278"/>
    <lineage>
        <taxon>Bacteria</taxon>
        <taxon>Pseudomonadati</taxon>
        <taxon>Spirochaetota</taxon>
        <taxon>Spirochaetia</taxon>
        <taxon>Leptospirales</taxon>
        <taxon>Leptospiraceae</taxon>
        <taxon>Leptospira</taxon>
    </lineage>
</organism>
<name>SYL_LEPBA</name>
<evidence type="ECO:0000255" key="1">
    <source>
        <dbReference type="HAMAP-Rule" id="MF_00049"/>
    </source>
</evidence>
<reference key="1">
    <citation type="journal article" date="2008" name="PLoS ONE">
        <title>Genome sequence of the saprophyte Leptospira biflexa provides insights into the evolution of Leptospira and the pathogenesis of leptospirosis.</title>
        <authorList>
            <person name="Picardeau M."/>
            <person name="Bulach D.M."/>
            <person name="Bouchier C."/>
            <person name="Zuerner R.L."/>
            <person name="Zidane N."/>
            <person name="Wilson P.J."/>
            <person name="Creno S."/>
            <person name="Kuczek E.S."/>
            <person name="Bommezzadri S."/>
            <person name="Davis J.C."/>
            <person name="McGrath A."/>
            <person name="Johnson M.J."/>
            <person name="Boursaux-Eude C."/>
            <person name="Seemann T."/>
            <person name="Rouy Z."/>
            <person name="Coppel R.L."/>
            <person name="Rood J.I."/>
            <person name="Lajus A."/>
            <person name="Davies J.K."/>
            <person name="Medigue C."/>
            <person name="Adler B."/>
        </authorList>
    </citation>
    <scope>NUCLEOTIDE SEQUENCE [LARGE SCALE GENOMIC DNA]</scope>
    <source>
        <strain>Patoc 1 / Ames</strain>
    </source>
</reference>
<accession>B0SAB8</accession>
<gene>
    <name evidence="1" type="primary">leuS</name>
    <name type="ordered locus">LBF_0255</name>
</gene>
<sequence>MNYPFQDIEQKWQKYWDHHQTFRTNTHSSKPKYYCLDMFPYPSGAGLHVGHPEGYTATDIISRLKRMEGYEVLHPMGWDAFGLPAERYAMTTGIHPRTTTKNNIDTFRRQIKSLGLSYDWEREISTTHPDYYRWTQWIFLQIYNSYFDRKQNKAVPITTLIQTLEREGSLFFEGVELPKGIQFTASEWKSKSRKEKEDILSHFRLVYEANIPVNWCEALGTVLANEEVEEWTSKGYSVERKPMRQYMMRITAYAERLLNDLSLCEWPPSTLEMQRNWIGKSEGLELSFHVPSLNKDITVYTTRPDTIFGATYLVLAPEHALVAELTTPEQTEAVGQYQKDCSLKSDLERTELNKDKTGVFTGAYAQLPTDPSVKVPIYISDYVLISYGTGAIMAVPAHDQRDYDFAVKFNLPIKQVIDGKMETNLAFDSKDSVCINSSSAEVQLDGKSYKDAFQTMVVWAEKKGIGRKKIQFKLRDWLFARQRYWGEPIPLVHFEDGSPKALSDSELPLVLPDLEEFKPSGTGESPLALAKDWLVYKDPETGEIGKRETNTMPQWAGSCYYYLRYIDPRNNDKLIDPELEKMWMPVEVYVGGAEHAVLHLLYSRFWHKILFDLGHVSTPEPFKKLVHQGLILGEDKGKMSKSRGNVVNPDDVVSEFGADTLRLFEMFMGPFEMSKPWSKNGVDGVFRFLNRVWRLFHSGENESFFVEDIEPNEAEQKTLHRTIKKVKDDIDSFSFNTAVSQMMIFINEFTSNPRKPKQVLEPFVLALSPFAPHLAEELWAKLGHTDSLAYHPYPKWDEKYLIDANITIVVQVNGKMRGEFLAPREIEEKEALSLAKEVEKAKPFWVGKEIKKEIYVKGKLVNIVVAG</sequence>
<protein>
    <recommendedName>
        <fullName evidence="1">Leucine--tRNA ligase</fullName>
        <ecNumber evidence="1">6.1.1.4</ecNumber>
    </recommendedName>
    <alternativeName>
        <fullName evidence="1">Leucyl-tRNA synthetase</fullName>
        <shortName evidence="1">LeuRS</shortName>
    </alternativeName>
</protein>